<proteinExistence type="evidence at protein level"/>
<gene>
    <name type="primary">SH3BP5L</name>
    <name type="synonym">KIAA1720</name>
    <name type="ORF">UNQ2766/PRO7133</name>
</gene>
<reference key="1">
    <citation type="journal article" date="2000" name="DNA Res.">
        <title>Prediction of the coding sequences of unidentified human genes. XIX. The complete sequences of 100 new cDNA clones from brain which code for large proteins in vitro.</title>
        <authorList>
            <person name="Nagase T."/>
            <person name="Kikuno R."/>
            <person name="Hattori A."/>
            <person name="Kondo Y."/>
            <person name="Okumura K."/>
            <person name="Ohara O."/>
        </authorList>
    </citation>
    <scope>NUCLEOTIDE SEQUENCE [LARGE SCALE MRNA] (ISOFORM 1)</scope>
    <source>
        <tissue>Brain</tissue>
    </source>
</reference>
<reference key="2">
    <citation type="journal article" date="2001" name="Genome Res.">
        <title>Towards a catalog of human genes and proteins: sequencing and analysis of 500 novel complete protein coding human cDNAs.</title>
        <authorList>
            <person name="Wiemann S."/>
            <person name="Weil B."/>
            <person name="Wellenreuther R."/>
            <person name="Gassenhuber J."/>
            <person name="Glassl S."/>
            <person name="Ansorge W."/>
            <person name="Boecher M."/>
            <person name="Bloecker H."/>
            <person name="Bauersachs S."/>
            <person name="Blum H."/>
            <person name="Lauber J."/>
            <person name="Duesterhoeft A."/>
            <person name="Beyer A."/>
            <person name="Koehrer K."/>
            <person name="Strack N."/>
            <person name="Mewes H.-W."/>
            <person name="Ottenwaelder B."/>
            <person name="Obermaier B."/>
            <person name="Tampe J."/>
            <person name="Heubner D."/>
            <person name="Wambutt R."/>
            <person name="Korn B."/>
            <person name="Klein M."/>
            <person name="Poustka A."/>
        </authorList>
    </citation>
    <scope>NUCLEOTIDE SEQUENCE [LARGE SCALE MRNA] (ISOFORM 1)</scope>
    <source>
        <tissue>Amygdala</tissue>
    </source>
</reference>
<reference key="3">
    <citation type="journal article" date="2003" name="Genome Res.">
        <title>The secreted protein discovery initiative (SPDI), a large-scale effort to identify novel human secreted and transmembrane proteins: a bioinformatics assessment.</title>
        <authorList>
            <person name="Clark H.F."/>
            <person name="Gurney A.L."/>
            <person name="Abaya E."/>
            <person name="Baker K."/>
            <person name="Baldwin D.T."/>
            <person name="Brush J."/>
            <person name="Chen J."/>
            <person name="Chow B."/>
            <person name="Chui C."/>
            <person name="Crowley C."/>
            <person name="Currell B."/>
            <person name="Deuel B."/>
            <person name="Dowd P."/>
            <person name="Eaton D."/>
            <person name="Foster J.S."/>
            <person name="Grimaldi C."/>
            <person name="Gu Q."/>
            <person name="Hass P.E."/>
            <person name="Heldens S."/>
            <person name="Huang A."/>
            <person name="Kim H.S."/>
            <person name="Klimowski L."/>
            <person name="Jin Y."/>
            <person name="Johnson S."/>
            <person name="Lee J."/>
            <person name="Lewis L."/>
            <person name="Liao D."/>
            <person name="Mark M.R."/>
            <person name="Robbie E."/>
            <person name="Sanchez C."/>
            <person name="Schoenfeld J."/>
            <person name="Seshagiri S."/>
            <person name="Simmons L."/>
            <person name="Singh J."/>
            <person name="Smith V."/>
            <person name="Stinson J."/>
            <person name="Vagts A."/>
            <person name="Vandlen R.L."/>
            <person name="Watanabe C."/>
            <person name="Wieand D."/>
            <person name="Woods K."/>
            <person name="Xie M.-H."/>
            <person name="Yansura D.G."/>
            <person name="Yi S."/>
            <person name="Yu G."/>
            <person name="Yuan J."/>
            <person name="Zhang M."/>
            <person name="Zhang Z."/>
            <person name="Goddard A.D."/>
            <person name="Wood W.I."/>
            <person name="Godowski P.J."/>
            <person name="Gray A.M."/>
        </authorList>
    </citation>
    <scope>NUCLEOTIDE SEQUENCE [LARGE SCALE MRNA] (ISOFORM 1)</scope>
</reference>
<reference key="4">
    <citation type="journal article" date="2004" name="Nat. Genet.">
        <title>Complete sequencing and characterization of 21,243 full-length human cDNAs.</title>
        <authorList>
            <person name="Ota T."/>
            <person name="Suzuki Y."/>
            <person name="Nishikawa T."/>
            <person name="Otsuki T."/>
            <person name="Sugiyama T."/>
            <person name="Irie R."/>
            <person name="Wakamatsu A."/>
            <person name="Hayashi K."/>
            <person name="Sato H."/>
            <person name="Nagai K."/>
            <person name="Kimura K."/>
            <person name="Makita H."/>
            <person name="Sekine M."/>
            <person name="Obayashi M."/>
            <person name="Nishi T."/>
            <person name="Shibahara T."/>
            <person name="Tanaka T."/>
            <person name="Ishii S."/>
            <person name="Yamamoto J."/>
            <person name="Saito K."/>
            <person name="Kawai Y."/>
            <person name="Isono Y."/>
            <person name="Nakamura Y."/>
            <person name="Nagahari K."/>
            <person name="Murakami K."/>
            <person name="Yasuda T."/>
            <person name="Iwayanagi T."/>
            <person name="Wagatsuma M."/>
            <person name="Shiratori A."/>
            <person name="Sudo H."/>
            <person name="Hosoiri T."/>
            <person name="Kaku Y."/>
            <person name="Kodaira H."/>
            <person name="Kondo H."/>
            <person name="Sugawara M."/>
            <person name="Takahashi M."/>
            <person name="Kanda K."/>
            <person name="Yokoi T."/>
            <person name="Furuya T."/>
            <person name="Kikkawa E."/>
            <person name="Omura Y."/>
            <person name="Abe K."/>
            <person name="Kamihara K."/>
            <person name="Katsuta N."/>
            <person name="Sato K."/>
            <person name="Tanikawa M."/>
            <person name="Yamazaki M."/>
            <person name="Ninomiya K."/>
            <person name="Ishibashi T."/>
            <person name="Yamashita H."/>
            <person name="Murakawa K."/>
            <person name="Fujimori K."/>
            <person name="Tanai H."/>
            <person name="Kimata M."/>
            <person name="Watanabe M."/>
            <person name="Hiraoka S."/>
            <person name="Chiba Y."/>
            <person name="Ishida S."/>
            <person name="Ono Y."/>
            <person name="Takiguchi S."/>
            <person name="Watanabe S."/>
            <person name="Yosida M."/>
            <person name="Hotuta T."/>
            <person name="Kusano J."/>
            <person name="Kanehori K."/>
            <person name="Takahashi-Fujii A."/>
            <person name="Hara H."/>
            <person name="Tanase T.-O."/>
            <person name="Nomura Y."/>
            <person name="Togiya S."/>
            <person name="Komai F."/>
            <person name="Hara R."/>
            <person name="Takeuchi K."/>
            <person name="Arita M."/>
            <person name="Imose N."/>
            <person name="Musashino K."/>
            <person name="Yuuki H."/>
            <person name="Oshima A."/>
            <person name="Sasaki N."/>
            <person name="Aotsuka S."/>
            <person name="Yoshikawa Y."/>
            <person name="Matsunawa H."/>
            <person name="Ichihara T."/>
            <person name="Shiohata N."/>
            <person name="Sano S."/>
            <person name="Moriya S."/>
            <person name="Momiyama H."/>
            <person name="Satoh N."/>
            <person name="Takami S."/>
            <person name="Terashima Y."/>
            <person name="Suzuki O."/>
            <person name="Nakagawa S."/>
            <person name="Senoh A."/>
            <person name="Mizoguchi H."/>
            <person name="Goto Y."/>
            <person name="Shimizu F."/>
            <person name="Wakebe H."/>
            <person name="Hishigaki H."/>
            <person name="Watanabe T."/>
            <person name="Sugiyama A."/>
            <person name="Takemoto M."/>
            <person name="Kawakami B."/>
            <person name="Yamazaki M."/>
            <person name="Watanabe K."/>
            <person name="Kumagai A."/>
            <person name="Itakura S."/>
            <person name="Fukuzumi Y."/>
            <person name="Fujimori Y."/>
            <person name="Komiyama M."/>
            <person name="Tashiro H."/>
            <person name="Tanigami A."/>
            <person name="Fujiwara T."/>
            <person name="Ono T."/>
            <person name="Yamada K."/>
            <person name="Fujii Y."/>
            <person name="Ozaki K."/>
            <person name="Hirao M."/>
            <person name="Ohmori Y."/>
            <person name="Kawabata A."/>
            <person name="Hikiji T."/>
            <person name="Kobatake N."/>
            <person name="Inagaki H."/>
            <person name="Ikema Y."/>
            <person name="Okamoto S."/>
            <person name="Okitani R."/>
            <person name="Kawakami T."/>
            <person name="Noguchi S."/>
            <person name="Itoh T."/>
            <person name="Shigeta K."/>
            <person name="Senba T."/>
            <person name="Matsumura K."/>
            <person name="Nakajima Y."/>
            <person name="Mizuno T."/>
            <person name="Morinaga M."/>
            <person name="Sasaki M."/>
            <person name="Togashi T."/>
            <person name="Oyama M."/>
            <person name="Hata H."/>
            <person name="Watanabe M."/>
            <person name="Komatsu T."/>
            <person name="Mizushima-Sugano J."/>
            <person name="Satoh T."/>
            <person name="Shirai Y."/>
            <person name="Takahashi Y."/>
            <person name="Nakagawa K."/>
            <person name="Okumura K."/>
            <person name="Nagase T."/>
            <person name="Nomura N."/>
            <person name="Kikuchi H."/>
            <person name="Masuho Y."/>
            <person name="Yamashita R."/>
            <person name="Nakai K."/>
            <person name="Yada T."/>
            <person name="Nakamura Y."/>
            <person name="Ohara O."/>
            <person name="Isogai T."/>
            <person name="Sugano S."/>
        </authorList>
    </citation>
    <scope>NUCLEOTIDE SEQUENCE [LARGE SCALE MRNA] (ISOFORMS 1 AND 2)</scope>
</reference>
<reference key="5">
    <citation type="journal article" date="2006" name="Nature">
        <title>The DNA sequence and biological annotation of human chromosome 1.</title>
        <authorList>
            <person name="Gregory S.G."/>
            <person name="Barlow K.F."/>
            <person name="McLay K.E."/>
            <person name="Kaul R."/>
            <person name="Swarbreck D."/>
            <person name="Dunham A."/>
            <person name="Scott C.E."/>
            <person name="Howe K.L."/>
            <person name="Woodfine K."/>
            <person name="Spencer C.C.A."/>
            <person name="Jones M.C."/>
            <person name="Gillson C."/>
            <person name="Searle S."/>
            <person name="Zhou Y."/>
            <person name="Kokocinski F."/>
            <person name="McDonald L."/>
            <person name="Evans R."/>
            <person name="Phillips K."/>
            <person name="Atkinson A."/>
            <person name="Cooper R."/>
            <person name="Jones C."/>
            <person name="Hall R.E."/>
            <person name="Andrews T.D."/>
            <person name="Lloyd C."/>
            <person name="Ainscough R."/>
            <person name="Almeida J.P."/>
            <person name="Ambrose K.D."/>
            <person name="Anderson F."/>
            <person name="Andrew R.W."/>
            <person name="Ashwell R.I.S."/>
            <person name="Aubin K."/>
            <person name="Babbage A.K."/>
            <person name="Bagguley C.L."/>
            <person name="Bailey J."/>
            <person name="Beasley H."/>
            <person name="Bethel G."/>
            <person name="Bird C.P."/>
            <person name="Bray-Allen S."/>
            <person name="Brown J.Y."/>
            <person name="Brown A.J."/>
            <person name="Buckley D."/>
            <person name="Burton J."/>
            <person name="Bye J."/>
            <person name="Carder C."/>
            <person name="Chapman J.C."/>
            <person name="Clark S.Y."/>
            <person name="Clarke G."/>
            <person name="Clee C."/>
            <person name="Cobley V."/>
            <person name="Collier R.E."/>
            <person name="Corby N."/>
            <person name="Coville G.J."/>
            <person name="Davies J."/>
            <person name="Deadman R."/>
            <person name="Dunn M."/>
            <person name="Earthrowl M."/>
            <person name="Ellington A.G."/>
            <person name="Errington H."/>
            <person name="Frankish A."/>
            <person name="Frankland J."/>
            <person name="French L."/>
            <person name="Garner P."/>
            <person name="Garnett J."/>
            <person name="Gay L."/>
            <person name="Ghori M.R.J."/>
            <person name="Gibson R."/>
            <person name="Gilby L.M."/>
            <person name="Gillett W."/>
            <person name="Glithero R.J."/>
            <person name="Grafham D.V."/>
            <person name="Griffiths C."/>
            <person name="Griffiths-Jones S."/>
            <person name="Grocock R."/>
            <person name="Hammond S."/>
            <person name="Harrison E.S.I."/>
            <person name="Hart E."/>
            <person name="Haugen E."/>
            <person name="Heath P.D."/>
            <person name="Holmes S."/>
            <person name="Holt K."/>
            <person name="Howden P.J."/>
            <person name="Hunt A.R."/>
            <person name="Hunt S.E."/>
            <person name="Hunter G."/>
            <person name="Isherwood J."/>
            <person name="James R."/>
            <person name="Johnson C."/>
            <person name="Johnson D."/>
            <person name="Joy A."/>
            <person name="Kay M."/>
            <person name="Kershaw J.K."/>
            <person name="Kibukawa M."/>
            <person name="Kimberley A.M."/>
            <person name="King A."/>
            <person name="Knights A.J."/>
            <person name="Lad H."/>
            <person name="Laird G."/>
            <person name="Lawlor S."/>
            <person name="Leongamornlert D.A."/>
            <person name="Lloyd D.M."/>
            <person name="Loveland J."/>
            <person name="Lovell J."/>
            <person name="Lush M.J."/>
            <person name="Lyne R."/>
            <person name="Martin S."/>
            <person name="Mashreghi-Mohammadi M."/>
            <person name="Matthews L."/>
            <person name="Matthews N.S.W."/>
            <person name="McLaren S."/>
            <person name="Milne S."/>
            <person name="Mistry S."/>
            <person name="Moore M.J.F."/>
            <person name="Nickerson T."/>
            <person name="O'Dell C.N."/>
            <person name="Oliver K."/>
            <person name="Palmeiri A."/>
            <person name="Palmer S.A."/>
            <person name="Parker A."/>
            <person name="Patel D."/>
            <person name="Pearce A.V."/>
            <person name="Peck A.I."/>
            <person name="Pelan S."/>
            <person name="Phelps K."/>
            <person name="Phillimore B.J."/>
            <person name="Plumb R."/>
            <person name="Rajan J."/>
            <person name="Raymond C."/>
            <person name="Rouse G."/>
            <person name="Saenphimmachak C."/>
            <person name="Sehra H.K."/>
            <person name="Sheridan E."/>
            <person name="Shownkeen R."/>
            <person name="Sims S."/>
            <person name="Skuce C.D."/>
            <person name="Smith M."/>
            <person name="Steward C."/>
            <person name="Subramanian S."/>
            <person name="Sycamore N."/>
            <person name="Tracey A."/>
            <person name="Tromans A."/>
            <person name="Van Helmond Z."/>
            <person name="Wall M."/>
            <person name="Wallis J.M."/>
            <person name="White S."/>
            <person name="Whitehead S.L."/>
            <person name="Wilkinson J.E."/>
            <person name="Willey D.L."/>
            <person name="Williams H."/>
            <person name="Wilming L."/>
            <person name="Wray P.W."/>
            <person name="Wu Z."/>
            <person name="Coulson A."/>
            <person name="Vaudin M."/>
            <person name="Sulston J.E."/>
            <person name="Durbin R.M."/>
            <person name="Hubbard T."/>
            <person name="Wooster R."/>
            <person name="Dunham I."/>
            <person name="Carter N.P."/>
            <person name="McVean G."/>
            <person name="Ross M.T."/>
            <person name="Harrow J."/>
            <person name="Olson M.V."/>
            <person name="Beck S."/>
            <person name="Rogers J."/>
            <person name="Bentley D.R."/>
        </authorList>
    </citation>
    <scope>NUCLEOTIDE SEQUENCE [LARGE SCALE GENOMIC DNA]</scope>
</reference>
<reference key="6">
    <citation type="submission" date="2005-07" db="EMBL/GenBank/DDBJ databases">
        <authorList>
            <person name="Mural R.J."/>
            <person name="Istrail S."/>
            <person name="Sutton G.G."/>
            <person name="Florea L."/>
            <person name="Halpern A.L."/>
            <person name="Mobarry C.M."/>
            <person name="Lippert R."/>
            <person name="Walenz B."/>
            <person name="Shatkay H."/>
            <person name="Dew I."/>
            <person name="Miller J.R."/>
            <person name="Flanigan M.J."/>
            <person name="Edwards N.J."/>
            <person name="Bolanos R."/>
            <person name="Fasulo D."/>
            <person name="Halldorsson B.V."/>
            <person name="Hannenhalli S."/>
            <person name="Turner R."/>
            <person name="Yooseph S."/>
            <person name="Lu F."/>
            <person name="Nusskern D.R."/>
            <person name="Shue B.C."/>
            <person name="Zheng X.H."/>
            <person name="Zhong F."/>
            <person name="Delcher A.L."/>
            <person name="Huson D.H."/>
            <person name="Kravitz S.A."/>
            <person name="Mouchard L."/>
            <person name="Reinert K."/>
            <person name="Remington K.A."/>
            <person name="Clark A.G."/>
            <person name="Waterman M.S."/>
            <person name="Eichler E.E."/>
            <person name="Adams M.D."/>
            <person name="Hunkapiller M.W."/>
            <person name="Myers E.W."/>
            <person name="Venter J.C."/>
        </authorList>
    </citation>
    <scope>NUCLEOTIDE SEQUENCE [LARGE SCALE GENOMIC DNA]</scope>
</reference>
<reference key="7">
    <citation type="journal article" date="2004" name="Genome Res.">
        <title>The status, quality, and expansion of the NIH full-length cDNA project: the Mammalian Gene Collection (MGC).</title>
        <authorList>
            <consortium name="The MGC Project Team"/>
        </authorList>
    </citation>
    <scope>NUCLEOTIDE SEQUENCE [LARGE SCALE MRNA] (ISOFORM 1)</scope>
    <source>
        <tissue>Colon</tissue>
        <tissue>Lung</tissue>
    </source>
</reference>
<reference key="8">
    <citation type="journal article" date="2008" name="Proc. Natl. Acad. Sci. U.S.A.">
        <title>A quantitative atlas of mitotic phosphorylation.</title>
        <authorList>
            <person name="Dephoure N."/>
            <person name="Zhou C."/>
            <person name="Villen J."/>
            <person name="Beausoleil S.A."/>
            <person name="Bakalarski C.E."/>
            <person name="Elledge S.J."/>
            <person name="Gygi S.P."/>
        </authorList>
    </citation>
    <scope>PHOSPHORYLATION [LARGE SCALE ANALYSIS] AT SER-343; SER-350 AND SER-362</scope>
    <scope>IDENTIFICATION BY MASS SPECTROMETRY [LARGE SCALE ANALYSIS]</scope>
    <source>
        <tissue>Cervix carcinoma</tissue>
    </source>
</reference>
<reference key="9">
    <citation type="journal article" date="2009" name="Sci. Signal.">
        <title>Quantitative phosphoproteomic analysis of T cell receptor signaling reveals system-wide modulation of protein-protein interactions.</title>
        <authorList>
            <person name="Mayya V."/>
            <person name="Lundgren D.H."/>
            <person name="Hwang S.-I."/>
            <person name="Rezaul K."/>
            <person name="Wu L."/>
            <person name="Eng J.K."/>
            <person name="Rodionov V."/>
            <person name="Han D.K."/>
        </authorList>
    </citation>
    <scope>PHOSPHORYLATION [LARGE SCALE ANALYSIS] AT SER-362</scope>
    <scope>IDENTIFICATION BY MASS SPECTROMETRY [LARGE SCALE ANALYSIS]</scope>
    <source>
        <tissue>Leukemic T-cell</tissue>
    </source>
</reference>
<reference key="10">
    <citation type="journal article" date="2010" name="Sci. Signal.">
        <title>Quantitative phosphoproteomics reveals widespread full phosphorylation site occupancy during mitosis.</title>
        <authorList>
            <person name="Olsen J.V."/>
            <person name="Vermeulen M."/>
            <person name="Santamaria A."/>
            <person name="Kumar C."/>
            <person name="Miller M.L."/>
            <person name="Jensen L.J."/>
            <person name="Gnad F."/>
            <person name="Cox J."/>
            <person name="Jensen T.S."/>
            <person name="Nigg E.A."/>
            <person name="Brunak S."/>
            <person name="Mann M."/>
        </authorList>
    </citation>
    <scope>PHOSPHORYLATION [LARGE SCALE ANALYSIS] AT SER-358 AND SER-362</scope>
    <scope>IDENTIFICATION BY MASS SPECTROMETRY [LARGE SCALE ANALYSIS]</scope>
    <source>
        <tissue>Cervix carcinoma</tissue>
    </source>
</reference>
<reference key="11">
    <citation type="journal article" date="2013" name="J. Proteome Res.">
        <title>Toward a comprehensive characterization of a human cancer cell phosphoproteome.</title>
        <authorList>
            <person name="Zhou H."/>
            <person name="Di Palma S."/>
            <person name="Preisinger C."/>
            <person name="Peng M."/>
            <person name="Polat A.N."/>
            <person name="Heck A.J."/>
            <person name="Mohammed S."/>
        </authorList>
    </citation>
    <scope>PHOSPHORYLATION [LARGE SCALE ANALYSIS] AT THR-13; SER-30; SER-343; SER-350 AND SER-362</scope>
    <scope>IDENTIFICATION BY MASS SPECTROMETRY [LARGE SCALE ANALYSIS]</scope>
    <source>
        <tissue>Cervix carcinoma</tissue>
        <tissue>Erythroleukemia</tissue>
    </source>
</reference>
<reference key="12">
    <citation type="journal article" date="2014" name="J. Proteomics">
        <title>An enzyme assisted RP-RPLC approach for in-depth analysis of human liver phosphoproteome.</title>
        <authorList>
            <person name="Bian Y."/>
            <person name="Song C."/>
            <person name="Cheng K."/>
            <person name="Dong M."/>
            <person name="Wang F."/>
            <person name="Huang J."/>
            <person name="Sun D."/>
            <person name="Wang L."/>
            <person name="Ye M."/>
            <person name="Zou H."/>
        </authorList>
    </citation>
    <scope>PHOSPHORYLATION [LARGE SCALE ANALYSIS] AT SER-30 AND SER-362</scope>
    <scope>IDENTIFICATION BY MASS SPECTROMETRY [LARGE SCALE ANALYSIS]</scope>
    <source>
        <tissue>Liver</tissue>
    </source>
</reference>
<reference key="13">
    <citation type="journal article" date="2018" name="Nat. Commun.">
        <title>Structural determinants of Rab11 activation by the guanine nucleotide exchange factor SH3BP5.</title>
        <authorList>
            <person name="Jenkins M.L."/>
            <person name="Margaria J.P."/>
            <person name="Stariha J.T.B."/>
            <person name="Hoffmann R.M."/>
            <person name="McPhail J.A."/>
            <person name="Hamelin D.J."/>
            <person name="Boulanger M.J."/>
            <person name="Hirsch E."/>
            <person name="Burke J.E."/>
        </authorList>
    </citation>
    <scope>FUNCTION</scope>
</reference>
<sequence>MAELRQVPGGRETPQGELRPEVVEDEVPRSPVAEEPGGGGSSSSEAKLSPREEEELDPRIQEELEHLNQASEEINQVELQLDEARTTYRRILQESARKLNTQGSHLGSCIEKARPYYEARRLAKEAQQETQKAALRYERAVSMHNAAREMVFVAEQGVMADKNRLDPTWQEMLNHATCKVNEAEEERLRGEREHQRVTRLCQQAEARVQALQKTLRRAIGKSRPYFELKAQFSQILEEHKAKVTELEQQVAQAKTRYSVALRNLEQISEQIHARRRGGLPPHPLGPRRSSPVGAEAGPEDMEDGDSGIEGAEGAGLEEGSSLGPGPAPDTDTLSLLSLRTVASDLQKCDSVEHLRGLSDHVSLDGQELGTRSGGRRGSDGGARGGRHQRSVSL</sequence>
<accession>Q7L8J4</accession>
<accession>B4DQ94</accession>
<accession>Q96FI5</accession>
<accession>Q9BQH8</accession>
<accession>Q9C0E3</accession>
<dbReference type="EMBL" id="AB051507">
    <property type="protein sequence ID" value="BAB21811.1"/>
    <property type="status" value="ALT_INIT"/>
    <property type="molecule type" value="mRNA"/>
</dbReference>
<dbReference type="EMBL" id="AL136569">
    <property type="protein sequence ID" value="CAB66504.1"/>
    <property type="molecule type" value="mRNA"/>
</dbReference>
<dbReference type="EMBL" id="AY358453">
    <property type="protein sequence ID" value="AAQ88818.1"/>
    <property type="molecule type" value="mRNA"/>
</dbReference>
<dbReference type="EMBL" id="AK056382">
    <property type="protein sequence ID" value="BAB71171.1"/>
    <property type="molecule type" value="mRNA"/>
</dbReference>
<dbReference type="EMBL" id="AK298698">
    <property type="protein sequence ID" value="BAG60856.1"/>
    <property type="molecule type" value="mRNA"/>
</dbReference>
<dbReference type="EMBL" id="AL732583">
    <property type="status" value="NOT_ANNOTATED_CDS"/>
    <property type="molecule type" value="Genomic_DNA"/>
</dbReference>
<dbReference type="EMBL" id="CH471257">
    <property type="protein sequence ID" value="EAW57534.1"/>
    <property type="molecule type" value="Genomic_DNA"/>
</dbReference>
<dbReference type="EMBL" id="BC010871">
    <property type="protein sequence ID" value="AAH10871.1"/>
    <property type="molecule type" value="mRNA"/>
</dbReference>
<dbReference type="EMBL" id="BC017254">
    <property type="protein sequence ID" value="AAH17254.1"/>
    <property type="molecule type" value="mRNA"/>
</dbReference>
<dbReference type="CCDS" id="CCDS31126.1">
    <molecule id="Q7L8J4-1"/>
</dbReference>
<dbReference type="RefSeq" id="NP_001309391.1">
    <property type="nucleotide sequence ID" value="NM_001322462.1"/>
</dbReference>
<dbReference type="RefSeq" id="NP_085148.1">
    <molecule id="Q7L8J4-1"/>
    <property type="nucleotide sequence ID" value="NM_030645.3"/>
</dbReference>
<dbReference type="RefSeq" id="XP_016857896.1">
    <property type="nucleotide sequence ID" value="XM_017002407.1"/>
</dbReference>
<dbReference type="SMR" id="Q7L8J4"/>
<dbReference type="BioGRID" id="123329">
    <property type="interactions" value="35"/>
</dbReference>
<dbReference type="FunCoup" id="Q7L8J4">
    <property type="interactions" value="1820"/>
</dbReference>
<dbReference type="IntAct" id="Q7L8J4">
    <property type="interactions" value="31"/>
</dbReference>
<dbReference type="MINT" id="Q7L8J4"/>
<dbReference type="STRING" id="9606.ENSP00000355428"/>
<dbReference type="iPTMnet" id="Q7L8J4"/>
<dbReference type="MetOSite" id="Q7L8J4"/>
<dbReference type="PhosphoSitePlus" id="Q7L8J4"/>
<dbReference type="BioMuta" id="SH3BP5L"/>
<dbReference type="DMDM" id="74749902"/>
<dbReference type="jPOST" id="Q7L8J4"/>
<dbReference type="MassIVE" id="Q7L8J4"/>
<dbReference type="PaxDb" id="9606-ENSP00000355428"/>
<dbReference type="PeptideAtlas" id="Q7L8J4"/>
<dbReference type="ProteomicsDB" id="4857"/>
<dbReference type="ProteomicsDB" id="68837">
    <molecule id="Q7L8J4-1"/>
</dbReference>
<dbReference type="Pumba" id="Q7L8J4"/>
<dbReference type="Antibodypedia" id="47904">
    <property type="antibodies" value="23 antibodies from 9 providers"/>
</dbReference>
<dbReference type="DNASU" id="80851"/>
<dbReference type="Ensembl" id="ENST00000366472.6">
    <molecule id="Q7L8J4-1"/>
    <property type="protein sequence ID" value="ENSP00000355428.5"/>
    <property type="gene ID" value="ENSG00000175137.11"/>
</dbReference>
<dbReference type="GeneID" id="80851"/>
<dbReference type="KEGG" id="hsa:80851"/>
<dbReference type="MANE-Select" id="ENST00000366472.6">
    <property type="protein sequence ID" value="ENSP00000355428.5"/>
    <property type="RefSeq nucleotide sequence ID" value="NM_030645.3"/>
    <property type="RefSeq protein sequence ID" value="NP_085148.1"/>
</dbReference>
<dbReference type="UCSC" id="uc001iew.2">
    <molecule id="Q7L8J4-1"/>
    <property type="organism name" value="human"/>
</dbReference>
<dbReference type="AGR" id="HGNC:29360"/>
<dbReference type="CTD" id="80851"/>
<dbReference type="GeneCards" id="SH3BP5L"/>
<dbReference type="HGNC" id="HGNC:29360">
    <property type="gene designation" value="SH3BP5L"/>
</dbReference>
<dbReference type="HPA" id="ENSG00000175137">
    <property type="expression patterns" value="Low tissue specificity"/>
</dbReference>
<dbReference type="MIM" id="620652">
    <property type="type" value="gene"/>
</dbReference>
<dbReference type="neXtProt" id="NX_Q7L8J4"/>
<dbReference type="OpenTargets" id="ENSG00000175137"/>
<dbReference type="PharmGKB" id="PA142670923"/>
<dbReference type="VEuPathDB" id="HostDB:ENSG00000175137"/>
<dbReference type="eggNOG" id="KOG2008">
    <property type="taxonomic scope" value="Eukaryota"/>
</dbReference>
<dbReference type="GeneTree" id="ENSGT00390000018500"/>
<dbReference type="HOGENOM" id="CLU_043711_0_0_1"/>
<dbReference type="InParanoid" id="Q7L8J4"/>
<dbReference type="OMA" id="QISAEIH"/>
<dbReference type="OrthoDB" id="446789at2759"/>
<dbReference type="PAN-GO" id="Q7L8J4">
    <property type="GO annotations" value="4 GO annotations based on evolutionary models"/>
</dbReference>
<dbReference type="PhylomeDB" id="Q7L8J4"/>
<dbReference type="TreeFam" id="TF105573"/>
<dbReference type="PathwayCommons" id="Q7L8J4"/>
<dbReference type="SignaLink" id="Q7L8J4"/>
<dbReference type="BioGRID-ORCS" id="80851">
    <property type="hits" value="19 hits in 1151 CRISPR screens"/>
</dbReference>
<dbReference type="ChiTaRS" id="SH3BP5L">
    <property type="organism name" value="human"/>
</dbReference>
<dbReference type="GenomeRNAi" id="80851"/>
<dbReference type="Pharos" id="Q7L8J4">
    <property type="development level" value="Tdark"/>
</dbReference>
<dbReference type="PRO" id="PR:Q7L8J4"/>
<dbReference type="Proteomes" id="UP000005640">
    <property type="component" value="Chromosome 1"/>
</dbReference>
<dbReference type="RNAct" id="Q7L8J4">
    <property type="molecule type" value="protein"/>
</dbReference>
<dbReference type="Bgee" id="ENSG00000175137">
    <property type="expression patterns" value="Expressed in lower esophagus mucosa and 156 other cell types or tissues"/>
</dbReference>
<dbReference type="ExpressionAtlas" id="Q7L8J4">
    <property type="expression patterns" value="baseline and differential"/>
</dbReference>
<dbReference type="GO" id="GO:0005737">
    <property type="term" value="C:cytoplasm"/>
    <property type="evidence" value="ECO:0000318"/>
    <property type="project" value="GO_Central"/>
</dbReference>
<dbReference type="GO" id="GO:0005085">
    <property type="term" value="F:guanyl-nucleotide exchange factor activity"/>
    <property type="evidence" value="ECO:0000314"/>
    <property type="project" value="UniProtKB"/>
</dbReference>
<dbReference type="GO" id="GO:0004860">
    <property type="term" value="F:protein kinase inhibitor activity"/>
    <property type="evidence" value="ECO:0000318"/>
    <property type="project" value="GO_Central"/>
</dbReference>
<dbReference type="GO" id="GO:0035556">
    <property type="term" value="P:intracellular signal transduction"/>
    <property type="evidence" value="ECO:0000318"/>
    <property type="project" value="GO_Central"/>
</dbReference>
<dbReference type="InterPro" id="IPR007940">
    <property type="entry name" value="SH3BP5"/>
</dbReference>
<dbReference type="PANTHER" id="PTHR19423">
    <property type="entry name" value="SH3 DOMAIN-BINDING PROTEIN 5"/>
    <property type="match status" value="1"/>
</dbReference>
<dbReference type="PANTHER" id="PTHR19423:SF8">
    <property type="entry name" value="SH3 DOMAIN-BINDING PROTEIN 5-LIKE"/>
    <property type="match status" value="1"/>
</dbReference>
<dbReference type="Pfam" id="PF05276">
    <property type="entry name" value="SH3BP5"/>
    <property type="match status" value="1"/>
</dbReference>
<evidence type="ECO:0000250" key="1">
    <source>
        <dbReference type="UniProtKB" id="Q99LH9"/>
    </source>
</evidence>
<evidence type="ECO:0000255" key="2"/>
<evidence type="ECO:0000256" key="3">
    <source>
        <dbReference type="SAM" id="MobiDB-lite"/>
    </source>
</evidence>
<evidence type="ECO:0000269" key="4">
    <source>
    </source>
</evidence>
<evidence type="ECO:0000303" key="5">
    <source>
    </source>
</evidence>
<evidence type="ECO:0000305" key="6"/>
<evidence type="ECO:0007744" key="7">
    <source>
    </source>
</evidence>
<evidence type="ECO:0007744" key="8">
    <source>
    </source>
</evidence>
<evidence type="ECO:0007744" key="9">
    <source>
    </source>
</evidence>
<evidence type="ECO:0007744" key="10">
    <source>
    </source>
</evidence>
<evidence type="ECO:0007744" key="11">
    <source>
    </source>
</evidence>
<organism>
    <name type="scientific">Homo sapiens</name>
    <name type="common">Human</name>
    <dbReference type="NCBI Taxonomy" id="9606"/>
    <lineage>
        <taxon>Eukaryota</taxon>
        <taxon>Metazoa</taxon>
        <taxon>Chordata</taxon>
        <taxon>Craniata</taxon>
        <taxon>Vertebrata</taxon>
        <taxon>Euteleostomi</taxon>
        <taxon>Mammalia</taxon>
        <taxon>Eutheria</taxon>
        <taxon>Euarchontoglires</taxon>
        <taxon>Primates</taxon>
        <taxon>Haplorrhini</taxon>
        <taxon>Catarrhini</taxon>
        <taxon>Hominidae</taxon>
        <taxon>Homo</taxon>
    </lineage>
</organism>
<protein>
    <recommendedName>
        <fullName>SH3 domain-binding protein 5-like</fullName>
        <shortName>SH3BP-5-like</shortName>
    </recommendedName>
</protein>
<keyword id="KW-0025">Alternative splicing</keyword>
<keyword id="KW-0175">Coiled coil</keyword>
<keyword id="KW-0344">Guanine-nucleotide releasing factor</keyword>
<keyword id="KW-0597">Phosphoprotein</keyword>
<keyword id="KW-1267">Proteomics identification</keyword>
<keyword id="KW-1185">Reference proteome</keyword>
<name>3BP5L_HUMAN</name>
<feature type="chain" id="PRO_0000317508" description="SH3 domain-binding protein 5-like">
    <location>
        <begin position="1"/>
        <end position="393"/>
    </location>
</feature>
<feature type="region of interest" description="Disordered" evidence="3">
    <location>
        <begin position="1"/>
        <end position="58"/>
    </location>
</feature>
<feature type="region of interest" description="Disordered" evidence="3">
    <location>
        <begin position="273"/>
        <end position="332"/>
    </location>
</feature>
<feature type="region of interest" description="Disordered" evidence="3">
    <location>
        <begin position="362"/>
        <end position="393"/>
    </location>
</feature>
<feature type="coiled-coil region" evidence="2">
    <location>
        <begin position="59"/>
        <end position="140"/>
    </location>
</feature>
<feature type="coiled-coil region" evidence="2">
    <location>
        <begin position="169"/>
        <end position="272"/>
    </location>
</feature>
<feature type="compositionally biased region" description="Basic and acidic residues" evidence="3">
    <location>
        <begin position="18"/>
        <end position="28"/>
    </location>
</feature>
<feature type="compositionally biased region" description="Acidic residues" evidence="3">
    <location>
        <begin position="297"/>
        <end position="306"/>
    </location>
</feature>
<feature type="compositionally biased region" description="Low complexity" evidence="3">
    <location>
        <begin position="317"/>
        <end position="332"/>
    </location>
</feature>
<feature type="compositionally biased region" description="Basic residues" evidence="3">
    <location>
        <begin position="384"/>
        <end position="393"/>
    </location>
</feature>
<feature type="modified residue" description="Phosphothreonine" evidence="10">
    <location>
        <position position="13"/>
    </location>
</feature>
<feature type="modified residue" description="Phosphoserine" evidence="10 11">
    <location>
        <position position="30"/>
    </location>
</feature>
<feature type="modified residue" description="Phosphoserine" evidence="1">
    <location>
        <position position="49"/>
    </location>
</feature>
<feature type="modified residue" description="Phosphoserine" evidence="7 10">
    <location>
        <position position="343"/>
    </location>
</feature>
<feature type="modified residue" description="Phosphoserine" evidence="7 10">
    <location>
        <position position="350"/>
    </location>
</feature>
<feature type="modified residue" description="Phosphoserine" evidence="9">
    <location>
        <position position="358"/>
    </location>
</feature>
<feature type="modified residue" description="Phosphoserine" evidence="7 8 9 10 11">
    <location>
        <position position="362"/>
    </location>
</feature>
<feature type="modified residue" description="Phosphoserine" evidence="1">
    <location>
        <position position="378"/>
    </location>
</feature>
<feature type="splice variant" id="VSP_056075" description="In isoform 2." evidence="5">
    <original>MAELRQVPGGRETPQGELRPEVVEDEVPRSPVAEEPGGGGSSSSEAKLSPREEEELDPRIQ</original>
    <variation>MYQVPDRQESFWQSPYLLSFPECLTSFPW</variation>
    <location>
        <begin position="1"/>
        <end position="61"/>
    </location>
</feature>
<comment type="function">
    <text evidence="4">Functions as a guanine nucleotide exchange factor (GEF) for RAB11A.</text>
</comment>
<comment type="interaction">
    <interactant intactId="EBI-747389">
        <id>Q7L8J4</id>
    </interactant>
    <interactant intactId="EBI-6624398">
        <id>P06307</id>
        <label>CCK</label>
    </interactant>
    <organismsDiffer>false</organismsDiffer>
    <experiments>3</experiments>
</comment>
<comment type="interaction">
    <interactant intactId="EBI-747389">
        <id>Q7L8J4</id>
    </interactant>
    <interactant intactId="EBI-11752486">
        <id>Q86XR8-3</id>
        <label>CEP57</label>
    </interactant>
    <organismsDiffer>false</organismsDiffer>
    <experiments>3</experiments>
</comment>
<comment type="interaction">
    <interactant intactId="EBI-747389">
        <id>Q7L8J4</id>
    </interactant>
    <interactant intactId="EBI-359031">
        <id>Q15006</id>
        <label>EMC2</label>
    </interactant>
    <organismsDiffer>false</organismsDiffer>
    <experiments>3</experiments>
</comment>
<comment type="interaction">
    <interactant intactId="EBI-747389">
        <id>Q7L8J4</id>
    </interactant>
    <interactant intactId="EBI-7225287">
        <id>Q96MY7</id>
        <label>FAM161B</label>
    </interactant>
    <organismsDiffer>false</organismsDiffer>
    <experiments>3</experiments>
</comment>
<comment type="interaction">
    <interactant intactId="EBI-747389">
        <id>Q7L8J4</id>
    </interactant>
    <interactant intactId="EBI-5280197">
        <id>O75400-2</id>
        <label>PRPF40A</label>
    </interactant>
    <organismsDiffer>false</organismsDiffer>
    <experiments>3</experiments>
</comment>
<comment type="interaction">
    <interactant intactId="EBI-747389">
        <id>Q7L8J4</id>
    </interactant>
    <interactant intactId="EBI-722234">
        <id>Q15907</id>
        <label>RAB11B</label>
    </interactant>
    <organismsDiffer>false</organismsDiffer>
    <experiments>7</experiments>
</comment>
<comment type="interaction">
    <interactant intactId="EBI-747389">
        <id>Q7L8J4</id>
    </interactant>
    <interactant intactId="EBI-1056404">
        <id>P61106</id>
        <label>RAB14</label>
    </interactant>
    <organismsDiffer>false</organismsDiffer>
    <experiments>3</experiments>
</comment>
<comment type="interaction">
    <interactant intactId="EBI-747389">
        <id>Q7L8J4</id>
    </interactant>
    <interactant intactId="EBI-1050500">
        <id>P57735</id>
        <label>RAB25</label>
    </interactant>
    <organismsDiffer>false</organismsDiffer>
    <experiments>3</experiments>
</comment>
<comment type="interaction">
    <interactant intactId="EBI-747389">
        <id>Q7L8J4</id>
    </interactant>
    <interactant intactId="EBI-2623095">
        <id>Q9Y371</id>
        <label>SH3GLB1</label>
    </interactant>
    <organismsDiffer>false</organismsDiffer>
    <experiments>3</experiments>
</comment>
<comment type="interaction">
    <interactant intactId="EBI-747389">
        <id>Q7L8J4</id>
    </interactant>
    <interactant intactId="EBI-3921347">
        <id>P51687</id>
        <label>SUOX</label>
    </interactant>
    <organismsDiffer>false</organismsDiffer>
    <experiments>3</experiments>
</comment>
<comment type="interaction">
    <interactant intactId="EBI-747389">
        <id>Q7L8J4</id>
    </interactant>
    <interactant intactId="EBI-347088">
        <id>P63104</id>
        <label>YWHAZ</label>
    </interactant>
    <organismsDiffer>false</organismsDiffer>
    <experiments>3</experiments>
</comment>
<comment type="alternative products">
    <event type="alternative splicing"/>
    <isoform>
        <id>Q7L8J4-1</id>
        <name>1</name>
        <sequence type="displayed"/>
    </isoform>
    <isoform>
        <id>Q7L8J4-2</id>
        <name>2</name>
        <sequence type="described" ref="VSP_056075"/>
    </isoform>
</comment>
<comment type="similarity">
    <text evidence="6">Belongs to the SH3BP5 family.</text>
</comment>
<comment type="sequence caution" evidence="6">
    <conflict type="erroneous initiation">
        <sequence resource="EMBL-CDS" id="BAB21811"/>
    </conflict>
</comment>